<keyword id="KW-0521">NADP</keyword>
<keyword id="KW-0560">Oxidoreductase</keyword>
<protein>
    <recommendedName>
        <fullName>NADP-specific glutamate dehydrogenase</fullName>
        <shortName>NADP-GDH</shortName>
        <ecNumber>1.4.1.4</ecNumber>
    </recommendedName>
</protein>
<evidence type="ECO:0000250" key="1"/>
<evidence type="ECO:0000255" key="2">
    <source>
        <dbReference type="PROSITE-ProRule" id="PRU10011"/>
    </source>
</evidence>
<evidence type="ECO:0000305" key="3"/>
<sequence length="447" mass="48557">MDQTCSLESFLNHVQKRDPHQTEFAQAVREVMTTLWPFLEQNPRYRHMSLLERLVEPERVIQFRVVWLDDKNQVQVNRAWRVQFNSAIGPYKGGMRFHPSVNLSILKFLGFEQTFKNALTTLPMGGGKGGSDFDPKGKSEGEVMRFCQALMTELYRHLGPDTDVPAGDIGVGGREVGFMAGMMRKLSNNSACVFTGKGLSFGGSLIRPEATGYGLVYFTEAMLKRHGLGFEGMRVAVSGSGNVAQYAIEKAMAFGARVVTASDSSGTVVDESGFTPEKLARLCEIKASRDGRVADYAREFGLTYLEGQQPWSVPVDIALPCATQNELDVDAARVLIANGVKAVAEGANMPTTIEATDLFLEAGVLFAPGKAANAGGVATSGLEMAQNAARLSWKAEKVDARLHHIMLDIHHACVKYGGDNKHTNYVQGANIAGFVKVADAMLAQGVI</sequence>
<organism>
    <name type="scientific">Salmonella typhi</name>
    <dbReference type="NCBI Taxonomy" id="90370"/>
    <lineage>
        <taxon>Bacteria</taxon>
        <taxon>Pseudomonadati</taxon>
        <taxon>Pseudomonadota</taxon>
        <taxon>Gammaproteobacteria</taxon>
        <taxon>Enterobacterales</taxon>
        <taxon>Enterobacteriaceae</taxon>
        <taxon>Salmonella</taxon>
    </lineage>
</organism>
<reference key="1">
    <citation type="journal article" date="2001" name="Nature">
        <title>Complete genome sequence of a multiple drug resistant Salmonella enterica serovar Typhi CT18.</title>
        <authorList>
            <person name="Parkhill J."/>
            <person name="Dougan G."/>
            <person name="James K.D."/>
            <person name="Thomson N.R."/>
            <person name="Pickard D."/>
            <person name="Wain J."/>
            <person name="Churcher C.M."/>
            <person name="Mungall K.L."/>
            <person name="Bentley S.D."/>
            <person name="Holden M.T.G."/>
            <person name="Sebaihia M."/>
            <person name="Baker S."/>
            <person name="Basham D."/>
            <person name="Brooks K."/>
            <person name="Chillingworth T."/>
            <person name="Connerton P."/>
            <person name="Cronin A."/>
            <person name="Davis P."/>
            <person name="Davies R.M."/>
            <person name="Dowd L."/>
            <person name="White N."/>
            <person name="Farrar J."/>
            <person name="Feltwell T."/>
            <person name="Hamlin N."/>
            <person name="Haque A."/>
            <person name="Hien T.T."/>
            <person name="Holroyd S."/>
            <person name="Jagels K."/>
            <person name="Krogh A."/>
            <person name="Larsen T.S."/>
            <person name="Leather S."/>
            <person name="Moule S."/>
            <person name="O'Gaora P."/>
            <person name="Parry C."/>
            <person name="Quail M.A."/>
            <person name="Rutherford K.M."/>
            <person name="Simmonds M."/>
            <person name="Skelton J."/>
            <person name="Stevens K."/>
            <person name="Whitehead S."/>
            <person name="Barrell B.G."/>
        </authorList>
    </citation>
    <scope>NUCLEOTIDE SEQUENCE [LARGE SCALE GENOMIC DNA]</scope>
    <source>
        <strain>CT18</strain>
    </source>
</reference>
<reference key="2">
    <citation type="journal article" date="2003" name="J. Bacteriol.">
        <title>Comparative genomics of Salmonella enterica serovar Typhi strains Ty2 and CT18.</title>
        <authorList>
            <person name="Deng W."/>
            <person name="Liou S.-R."/>
            <person name="Plunkett G. III"/>
            <person name="Mayhew G.F."/>
            <person name="Rose D.J."/>
            <person name="Burland V."/>
            <person name="Kodoyianni V."/>
            <person name="Schwartz D.C."/>
            <person name="Blattner F.R."/>
        </authorList>
    </citation>
    <scope>NUCLEOTIDE SEQUENCE [LARGE SCALE GENOMIC DNA]</scope>
    <source>
        <strain>ATCC 700931 / Ty2</strain>
    </source>
</reference>
<name>DHE4_SALTI</name>
<gene>
    <name type="primary">gdhA</name>
    <name type="ordered locus">STY1815</name>
    <name type="ordered locus">t1178</name>
</gene>
<accession>Q8Z6F6</accession>
<dbReference type="EC" id="1.4.1.4"/>
<dbReference type="EMBL" id="AL513382">
    <property type="protein sequence ID" value="CAD02055.1"/>
    <property type="molecule type" value="Genomic_DNA"/>
</dbReference>
<dbReference type="EMBL" id="AE014613">
    <property type="protein sequence ID" value="AAO68835.1"/>
    <property type="molecule type" value="Genomic_DNA"/>
</dbReference>
<dbReference type="RefSeq" id="NP_456213.1">
    <property type="nucleotide sequence ID" value="NC_003198.1"/>
</dbReference>
<dbReference type="RefSeq" id="WP_000372866.1">
    <property type="nucleotide sequence ID" value="NZ_WSUR01000034.1"/>
</dbReference>
<dbReference type="SMR" id="Q8Z6F6"/>
<dbReference type="STRING" id="220341.gene:17585747"/>
<dbReference type="KEGG" id="stt:t1178"/>
<dbReference type="KEGG" id="sty:STY1815"/>
<dbReference type="PATRIC" id="fig|220341.7.peg.1828"/>
<dbReference type="eggNOG" id="COG0334">
    <property type="taxonomic scope" value="Bacteria"/>
</dbReference>
<dbReference type="HOGENOM" id="CLU_025763_2_1_6"/>
<dbReference type="OMA" id="PCFAAFP"/>
<dbReference type="OrthoDB" id="9803297at2"/>
<dbReference type="Proteomes" id="UP000000541">
    <property type="component" value="Chromosome"/>
</dbReference>
<dbReference type="Proteomes" id="UP000002670">
    <property type="component" value="Chromosome"/>
</dbReference>
<dbReference type="GO" id="GO:0005737">
    <property type="term" value="C:cytoplasm"/>
    <property type="evidence" value="ECO:0000250"/>
    <property type="project" value="UniProtKB"/>
</dbReference>
<dbReference type="GO" id="GO:0005829">
    <property type="term" value="C:cytosol"/>
    <property type="evidence" value="ECO:0007669"/>
    <property type="project" value="TreeGrafter"/>
</dbReference>
<dbReference type="GO" id="GO:0004354">
    <property type="term" value="F:glutamate dehydrogenase (NADP+) activity"/>
    <property type="evidence" value="ECO:0000250"/>
    <property type="project" value="UniProtKB"/>
</dbReference>
<dbReference type="GO" id="GO:0006537">
    <property type="term" value="P:glutamate biosynthetic process"/>
    <property type="evidence" value="ECO:0000250"/>
    <property type="project" value="UniProtKB"/>
</dbReference>
<dbReference type="CDD" id="cd05313">
    <property type="entry name" value="NAD_bind_2_Glu_DH"/>
    <property type="match status" value="1"/>
</dbReference>
<dbReference type="FunFam" id="1.10.285.10:FF:000001">
    <property type="entry name" value="Glutamate dehydrogenase"/>
    <property type="match status" value="1"/>
</dbReference>
<dbReference type="FunFam" id="1.10.285.10:FF:000002">
    <property type="entry name" value="Glutamate dehydrogenase"/>
    <property type="match status" value="1"/>
</dbReference>
<dbReference type="FunFam" id="3.40.50.10860:FF:000002">
    <property type="entry name" value="Glutamate dehydrogenase"/>
    <property type="match status" value="1"/>
</dbReference>
<dbReference type="FunFam" id="3.40.50.720:FF:000030">
    <property type="entry name" value="Glutamate dehydrogenase"/>
    <property type="match status" value="1"/>
</dbReference>
<dbReference type="Gene3D" id="1.10.285.10">
    <property type="entry name" value="Glutamate Dehydrogenase, chain A, domain 3"/>
    <property type="match status" value="2"/>
</dbReference>
<dbReference type="Gene3D" id="3.40.50.10860">
    <property type="entry name" value="Leucine Dehydrogenase, chain A, domain 1"/>
    <property type="match status" value="1"/>
</dbReference>
<dbReference type="Gene3D" id="3.40.50.720">
    <property type="entry name" value="NAD(P)-binding Rossmann-like Domain"/>
    <property type="match status" value="1"/>
</dbReference>
<dbReference type="InterPro" id="IPR046346">
    <property type="entry name" value="Aminoacid_DH-like_N_sf"/>
</dbReference>
<dbReference type="InterPro" id="IPR006095">
    <property type="entry name" value="Glu/Leu/Phe/Val/Trp_DH"/>
</dbReference>
<dbReference type="InterPro" id="IPR006096">
    <property type="entry name" value="Glu/Leu/Phe/Val/Trp_DH_C"/>
</dbReference>
<dbReference type="InterPro" id="IPR006097">
    <property type="entry name" value="Glu/Leu/Phe/Val/Trp_DH_dimer"/>
</dbReference>
<dbReference type="InterPro" id="IPR033524">
    <property type="entry name" value="Glu/Leu/Phe/Val_DH_AS"/>
</dbReference>
<dbReference type="InterPro" id="IPR014362">
    <property type="entry name" value="Glu_DH"/>
</dbReference>
<dbReference type="InterPro" id="IPR050724">
    <property type="entry name" value="Glu_Leu_Phe_Val_DH"/>
</dbReference>
<dbReference type="InterPro" id="IPR036291">
    <property type="entry name" value="NAD(P)-bd_dom_sf"/>
</dbReference>
<dbReference type="InterPro" id="IPR033922">
    <property type="entry name" value="NAD_bind_Glu_DH"/>
</dbReference>
<dbReference type="NCBIfam" id="NF006929">
    <property type="entry name" value="PRK09414.1"/>
    <property type="match status" value="1"/>
</dbReference>
<dbReference type="PANTHER" id="PTHR43571">
    <property type="entry name" value="NADP-SPECIFIC GLUTAMATE DEHYDROGENASE 1-RELATED"/>
    <property type="match status" value="1"/>
</dbReference>
<dbReference type="PANTHER" id="PTHR43571:SF1">
    <property type="entry name" value="NADP-SPECIFIC GLUTAMATE DEHYDROGENASE 1-RELATED"/>
    <property type="match status" value="1"/>
</dbReference>
<dbReference type="Pfam" id="PF00208">
    <property type="entry name" value="ELFV_dehydrog"/>
    <property type="match status" value="1"/>
</dbReference>
<dbReference type="Pfam" id="PF02812">
    <property type="entry name" value="ELFV_dehydrog_N"/>
    <property type="match status" value="1"/>
</dbReference>
<dbReference type="PIRSF" id="PIRSF000185">
    <property type="entry name" value="Glu_DH"/>
    <property type="match status" value="1"/>
</dbReference>
<dbReference type="PRINTS" id="PR00082">
    <property type="entry name" value="GLFDHDRGNASE"/>
</dbReference>
<dbReference type="SMART" id="SM00839">
    <property type="entry name" value="ELFV_dehydrog"/>
    <property type="match status" value="1"/>
</dbReference>
<dbReference type="SUPFAM" id="SSF53223">
    <property type="entry name" value="Aminoacid dehydrogenase-like, N-terminal domain"/>
    <property type="match status" value="1"/>
</dbReference>
<dbReference type="SUPFAM" id="SSF51735">
    <property type="entry name" value="NAD(P)-binding Rossmann-fold domains"/>
    <property type="match status" value="1"/>
</dbReference>
<dbReference type="PROSITE" id="PS00074">
    <property type="entry name" value="GLFV_DEHYDROGENASE"/>
    <property type="match status" value="1"/>
</dbReference>
<comment type="function">
    <text evidence="1">Catalyzes the reversible oxidative deamination of glutamate to alpha-ketoglutarate and ammonia.</text>
</comment>
<comment type="catalytic activity">
    <reaction>
        <text>L-glutamate + NADP(+) + H2O = 2-oxoglutarate + NH4(+) + NADPH + H(+)</text>
        <dbReference type="Rhea" id="RHEA:11612"/>
        <dbReference type="ChEBI" id="CHEBI:15377"/>
        <dbReference type="ChEBI" id="CHEBI:15378"/>
        <dbReference type="ChEBI" id="CHEBI:16810"/>
        <dbReference type="ChEBI" id="CHEBI:28938"/>
        <dbReference type="ChEBI" id="CHEBI:29985"/>
        <dbReference type="ChEBI" id="CHEBI:57783"/>
        <dbReference type="ChEBI" id="CHEBI:58349"/>
        <dbReference type="EC" id="1.4.1.4"/>
    </reaction>
</comment>
<comment type="subunit">
    <text evidence="1">Homohexamer.</text>
</comment>
<comment type="similarity">
    <text evidence="3">Belongs to the Glu/Leu/Phe/Val dehydrogenases family.</text>
</comment>
<feature type="chain" id="PRO_0000182775" description="NADP-specific glutamate dehydrogenase">
    <location>
        <begin position="1"/>
        <end position="447"/>
    </location>
</feature>
<feature type="active site" description="Proton donor" evidence="2">
    <location>
        <position position="128"/>
    </location>
</feature>
<feature type="binding site" evidence="1">
    <location>
        <position position="92"/>
    </location>
    <ligand>
        <name>substrate</name>
    </ligand>
</feature>
<feature type="binding site" evidence="1">
    <location>
        <position position="113"/>
    </location>
    <ligand>
        <name>substrate</name>
    </ligand>
</feature>
<feature type="binding site" evidence="1">
    <location>
        <position position="116"/>
    </location>
    <ligand>
        <name>substrate</name>
    </ligand>
</feature>
<feature type="binding site" evidence="1">
    <location>
        <position position="167"/>
    </location>
    <ligand>
        <name>substrate</name>
    </ligand>
</feature>
<feature type="binding site" evidence="1">
    <location>
        <position position="211"/>
    </location>
    <ligand>
        <name>NADP(+)</name>
        <dbReference type="ChEBI" id="CHEBI:58349"/>
    </ligand>
</feature>
<feature type="binding site" evidence="1">
    <location>
        <position position="242"/>
    </location>
    <ligand>
        <name>NADP(+)</name>
        <dbReference type="ChEBI" id="CHEBI:58349"/>
    </ligand>
</feature>
<feature type="binding site" evidence="1">
    <location>
        <position position="380"/>
    </location>
    <ligand>
        <name>substrate</name>
    </ligand>
</feature>
<feature type="site" description="Important for catalysis" evidence="1">
    <location>
        <position position="168"/>
    </location>
</feature>
<proteinExistence type="inferred from homology"/>